<reference key="1">
    <citation type="journal article" date="2007" name="Nat. Biotechnol.">
        <title>Comparative analysis of the complete genome sequence of the plant growth-promoting bacterium Bacillus amyloliquefaciens FZB42.</title>
        <authorList>
            <person name="Chen X.H."/>
            <person name="Koumoutsi A."/>
            <person name="Scholz R."/>
            <person name="Eisenreich A."/>
            <person name="Schneider K."/>
            <person name="Heinemeyer I."/>
            <person name="Morgenstern B."/>
            <person name="Voss B."/>
            <person name="Hess W.R."/>
            <person name="Reva O."/>
            <person name="Junge H."/>
            <person name="Voigt B."/>
            <person name="Jungblut P.R."/>
            <person name="Vater J."/>
            <person name="Suessmuth R."/>
            <person name="Liesegang H."/>
            <person name="Strittmatter A."/>
            <person name="Gottschalk G."/>
            <person name="Borriss R."/>
        </authorList>
    </citation>
    <scope>NUCLEOTIDE SEQUENCE [LARGE SCALE GENOMIC DNA]</scope>
    <source>
        <strain>DSM 23117 / BGSC 10A6 / LMG 26770 / FZB42</strain>
    </source>
</reference>
<keyword id="KW-0028">Amino-acid biosynthesis</keyword>
<keyword id="KW-0100">Branched-chain amino acid biosynthesis</keyword>
<keyword id="KW-0963">Cytoplasm</keyword>
<keyword id="KW-0432">Leucine biosynthesis</keyword>
<keyword id="KW-0464">Manganese</keyword>
<keyword id="KW-0479">Metal-binding</keyword>
<keyword id="KW-0808">Transferase</keyword>
<proteinExistence type="inferred from homology"/>
<gene>
    <name evidence="1" type="primary">leuA</name>
    <name type="ordered locus">RBAM_025340</name>
</gene>
<evidence type="ECO:0000255" key="1">
    <source>
        <dbReference type="HAMAP-Rule" id="MF_01025"/>
    </source>
</evidence>
<accession>A7Z7B8</accession>
<comment type="function">
    <text evidence="1">Catalyzes the condensation of the acetyl group of acetyl-CoA with 3-methyl-2-oxobutanoate (2-ketoisovalerate) to form 3-carboxy-3-hydroxy-4-methylpentanoate (2-isopropylmalate).</text>
</comment>
<comment type="catalytic activity">
    <reaction evidence="1">
        <text>3-methyl-2-oxobutanoate + acetyl-CoA + H2O = (2S)-2-isopropylmalate + CoA + H(+)</text>
        <dbReference type="Rhea" id="RHEA:21524"/>
        <dbReference type="ChEBI" id="CHEBI:1178"/>
        <dbReference type="ChEBI" id="CHEBI:11851"/>
        <dbReference type="ChEBI" id="CHEBI:15377"/>
        <dbReference type="ChEBI" id="CHEBI:15378"/>
        <dbReference type="ChEBI" id="CHEBI:57287"/>
        <dbReference type="ChEBI" id="CHEBI:57288"/>
        <dbReference type="EC" id="2.3.3.13"/>
    </reaction>
</comment>
<comment type="cofactor">
    <cofactor evidence="1">
        <name>Mn(2+)</name>
        <dbReference type="ChEBI" id="CHEBI:29035"/>
    </cofactor>
</comment>
<comment type="pathway">
    <text evidence="1">Amino-acid biosynthesis; L-leucine biosynthesis; L-leucine from 3-methyl-2-oxobutanoate: step 1/4.</text>
</comment>
<comment type="subunit">
    <text evidence="1">Homodimer.</text>
</comment>
<comment type="subcellular location">
    <subcellularLocation>
        <location evidence="1">Cytoplasm</location>
    </subcellularLocation>
</comment>
<comment type="similarity">
    <text evidence="1">Belongs to the alpha-IPM synthase/homocitrate synthase family. LeuA type 1 subfamily.</text>
</comment>
<protein>
    <recommendedName>
        <fullName evidence="1">2-isopropylmalate synthase</fullName>
        <ecNumber evidence="1">2.3.3.13</ecNumber>
    </recommendedName>
    <alternativeName>
        <fullName evidence="1">Alpha-IPM synthase</fullName>
    </alternativeName>
    <alternativeName>
        <fullName evidence="1">Alpha-isopropylmalate synthase</fullName>
    </alternativeName>
</protein>
<name>LEU1_BACVZ</name>
<organism>
    <name type="scientific">Bacillus velezensis (strain DSM 23117 / BGSC 10A6 / LMG 26770 / FZB42)</name>
    <name type="common">Bacillus amyloliquefaciens subsp. plantarum</name>
    <dbReference type="NCBI Taxonomy" id="326423"/>
    <lineage>
        <taxon>Bacteria</taxon>
        <taxon>Bacillati</taxon>
        <taxon>Bacillota</taxon>
        <taxon>Bacilli</taxon>
        <taxon>Bacillales</taxon>
        <taxon>Bacillaceae</taxon>
        <taxon>Bacillus</taxon>
        <taxon>Bacillus amyloliquefaciens group</taxon>
    </lineage>
</organism>
<feature type="chain" id="PRO_1000149125" description="2-isopropylmalate synthase">
    <location>
        <begin position="1"/>
        <end position="518"/>
    </location>
</feature>
<feature type="domain" description="Pyruvate carboxyltransferase" evidence="1">
    <location>
        <begin position="4"/>
        <end position="266"/>
    </location>
</feature>
<feature type="region of interest" description="Regulatory domain" evidence="1">
    <location>
        <begin position="391"/>
        <end position="518"/>
    </location>
</feature>
<feature type="binding site" evidence="1">
    <location>
        <position position="13"/>
    </location>
    <ligand>
        <name>Mn(2+)</name>
        <dbReference type="ChEBI" id="CHEBI:29035"/>
    </ligand>
</feature>
<feature type="binding site" evidence="1">
    <location>
        <position position="201"/>
    </location>
    <ligand>
        <name>Mn(2+)</name>
        <dbReference type="ChEBI" id="CHEBI:29035"/>
    </ligand>
</feature>
<feature type="binding site" evidence="1">
    <location>
        <position position="203"/>
    </location>
    <ligand>
        <name>Mn(2+)</name>
        <dbReference type="ChEBI" id="CHEBI:29035"/>
    </ligand>
</feature>
<feature type="binding site" evidence="1">
    <location>
        <position position="237"/>
    </location>
    <ligand>
        <name>Mn(2+)</name>
        <dbReference type="ChEBI" id="CHEBI:29035"/>
    </ligand>
</feature>
<sequence>MRKINVFDTTLRDGEQSPGVNLNSREKLAIAKQLERLGVDIIEAGFPASSRGDFLAVQEIARTIKNCSVTGLARSVKGDIDAAWEALKDGVSPRIHIFIATSDIHLKHKLKMTREEVKEKAVEMVKYAKERFPIVQWSAEDACRTELPFLAEIVEEVIDAGASVINLPDTVGYLTPDEYGNIFKYMKEHVPNISRVKLSAHCHDDLGMAVANSLSAIENGADQIECAINGIGERAGNAALEEIAVALHVRNDAHQADSSLNLHELKRTSDLVSKLTGMAVPRNKAIVGDNAFAHESGIHQDGFLKEKSTYEIISPELVGVTADALVLGKHSGRHAFKDRLNTLGFQFDSDEINKYFTMFKELTEKKKEITDDDLISLILEEKVTDKKIGYEFLSLQVHYGTSQVPTATVSLKNQENEQLMQEAATGAGSVEAVYNTLGRCIDKNIELTDYRIQSNRKGEDALAQVFVRVTVNGKESSGRGIAQDVLEASAKAYLNAVNRQLVLDCNLDGLKRQTAVGS</sequence>
<dbReference type="EC" id="2.3.3.13" evidence="1"/>
<dbReference type="EMBL" id="CP000560">
    <property type="protein sequence ID" value="ABS74894.1"/>
    <property type="molecule type" value="Genomic_DNA"/>
</dbReference>
<dbReference type="RefSeq" id="WP_012118119.1">
    <property type="nucleotide sequence ID" value="NC_009725.2"/>
</dbReference>
<dbReference type="SMR" id="A7Z7B8"/>
<dbReference type="GeneID" id="93081676"/>
<dbReference type="KEGG" id="bay:RBAM_025340"/>
<dbReference type="HOGENOM" id="CLU_022158_0_1_9"/>
<dbReference type="UniPathway" id="UPA00048">
    <property type="reaction ID" value="UER00070"/>
</dbReference>
<dbReference type="Proteomes" id="UP000001120">
    <property type="component" value="Chromosome"/>
</dbReference>
<dbReference type="GO" id="GO:0005737">
    <property type="term" value="C:cytoplasm"/>
    <property type="evidence" value="ECO:0007669"/>
    <property type="project" value="UniProtKB-SubCell"/>
</dbReference>
<dbReference type="GO" id="GO:0003852">
    <property type="term" value="F:2-isopropylmalate synthase activity"/>
    <property type="evidence" value="ECO:0007669"/>
    <property type="project" value="UniProtKB-UniRule"/>
</dbReference>
<dbReference type="GO" id="GO:0003985">
    <property type="term" value="F:acetyl-CoA C-acetyltransferase activity"/>
    <property type="evidence" value="ECO:0007669"/>
    <property type="project" value="UniProtKB-UniRule"/>
</dbReference>
<dbReference type="GO" id="GO:0030145">
    <property type="term" value="F:manganese ion binding"/>
    <property type="evidence" value="ECO:0007669"/>
    <property type="project" value="UniProtKB-UniRule"/>
</dbReference>
<dbReference type="GO" id="GO:0009098">
    <property type="term" value="P:L-leucine biosynthetic process"/>
    <property type="evidence" value="ECO:0007669"/>
    <property type="project" value="UniProtKB-UniRule"/>
</dbReference>
<dbReference type="CDD" id="cd07940">
    <property type="entry name" value="DRE_TIM_IPMS"/>
    <property type="match status" value="1"/>
</dbReference>
<dbReference type="FunFam" id="1.10.238.260:FF:000001">
    <property type="entry name" value="2-isopropylmalate synthase"/>
    <property type="match status" value="1"/>
</dbReference>
<dbReference type="FunFam" id="3.20.20.70:FF:000010">
    <property type="entry name" value="2-isopropylmalate synthase"/>
    <property type="match status" value="1"/>
</dbReference>
<dbReference type="FunFam" id="3.30.160.270:FF:000003">
    <property type="entry name" value="2-isopropylmalate synthase"/>
    <property type="match status" value="1"/>
</dbReference>
<dbReference type="Gene3D" id="1.10.238.260">
    <property type="match status" value="1"/>
</dbReference>
<dbReference type="Gene3D" id="3.30.160.270">
    <property type="match status" value="1"/>
</dbReference>
<dbReference type="Gene3D" id="3.20.20.70">
    <property type="entry name" value="Aldolase class I"/>
    <property type="match status" value="1"/>
</dbReference>
<dbReference type="HAMAP" id="MF_01025">
    <property type="entry name" value="LeuA_type1"/>
    <property type="match status" value="1"/>
</dbReference>
<dbReference type="InterPro" id="IPR050073">
    <property type="entry name" value="2-IPM_HCS-like"/>
</dbReference>
<dbReference type="InterPro" id="IPR013709">
    <property type="entry name" value="2-isopropylmalate_synth_dimer"/>
</dbReference>
<dbReference type="InterPro" id="IPR002034">
    <property type="entry name" value="AIPM/Hcit_synth_CS"/>
</dbReference>
<dbReference type="InterPro" id="IPR013785">
    <property type="entry name" value="Aldolase_TIM"/>
</dbReference>
<dbReference type="InterPro" id="IPR054691">
    <property type="entry name" value="LeuA/HCS_post-cat"/>
</dbReference>
<dbReference type="InterPro" id="IPR036230">
    <property type="entry name" value="LeuA_allosteric_dom_sf"/>
</dbReference>
<dbReference type="InterPro" id="IPR005671">
    <property type="entry name" value="LeuA_bact_synth"/>
</dbReference>
<dbReference type="InterPro" id="IPR000891">
    <property type="entry name" value="PYR_CT"/>
</dbReference>
<dbReference type="NCBIfam" id="TIGR00973">
    <property type="entry name" value="leuA_bact"/>
    <property type="match status" value="1"/>
</dbReference>
<dbReference type="NCBIfam" id="NF002086">
    <property type="entry name" value="PRK00915.1-3"/>
    <property type="match status" value="1"/>
</dbReference>
<dbReference type="NCBIfam" id="NF002088">
    <property type="entry name" value="PRK00915.1-5"/>
    <property type="match status" value="1"/>
</dbReference>
<dbReference type="PANTHER" id="PTHR10277:SF9">
    <property type="entry name" value="2-ISOPROPYLMALATE SYNTHASE 1, CHLOROPLASTIC-RELATED"/>
    <property type="match status" value="1"/>
</dbReference>
<dbReference type="PANTHER" id="PTHR10277">
    <property type="entry name" value="HOMOCITRATE SYNTHASE-RELATED"/>
    <property type="match status" value="1"/>
</dbReference>
<dbReference type="Pfam" id="PF22617">
    <property type="entry name" value="HCS_D2"/>
    <property type="match status" value="1"/>
</dbReference>
<dbReference type="Pfam" id="PF00682">
    <property type="entry name" value="HMGL-like"/>
    <property type="match status" value="1"/>
</dbReference>
<dbReference type="Pfam" id="PF08502">
    <property type="entry name" value="LeuA_dimer"/>
    <property type="match status" value="1"/>
</dbReference>
<dbReference type="SMART" id="SM00917">
    <property type="entry name" value="LeuA_dimer"/>
    <property type="match status" value="1"/>
</dbReference>
<dbReference type="SUPFAM" id="SSF110921">
    <property type="entry name" value="2-isopropylmalate synthase LeuA, allosteric (dimerisation) domain"/>
    <property type="match status" value="1"/>
</dbReference>
<dbReference type="SUPFAM" id="SSF51569">
    <property type="entry name" value="Aldolase"/>
    <property type="match status" value="1"/>
</dbReference>
<dbReference type="PROSITE" id="PS00815">
    <property type="entry name" value="AIPM_HOMOCIT_SYNTH_1"/>
    <property type="match status" value="1"/>
</dbReference>
<dbReference type="PROSITE" id="PS00816">
    <property type="entry name" value="AIPM_HOMOCIT_SYNTH_2"/>
    <property type="match status" value="1"/>
</dbReference>
<dbReference type="PROSITE" id="PS50991">
    <property type="entry name" value="PYR_CT"/>
    <property type="match status" value="1"/>
</dbReference>